<accession>Q28389</accession>
<keyword id="KW-0064">Aspartyl protease</keyword>
<keyword id="KW-1015">Disulfide bond</keyword>
<keyword id="KW-0325">Glycoprotein</keyword>
<keyword id="KW-0378">Hydrolase</keyword>
<keyword id="KW-0645">Protease</keyword>
<keyword id="KW-1185">Reference proteome</keyword>
<keyword id="KW-0964">Secreted</keyword>
<keyword id="KW-0732">Signal</keyword>
<keyword id="KW-0865">Zymogen</keyword>
<feature type="signal peptide" evidence="2">
    <location>
        <begin position="1"/>
        <end position="15"/>
    </location>
</feature>
<feature type="propeptide" id="PRO_0000026103" description="Activation peptide" evidence="2">
    <location>
        <begin position="16"/>
        <end status="unknown"/>
    </location>
</feature>
<feature type="chain" id="PRO_0000026104" description="Pregnancy-associated glycoprotein">
    <location>
        <begin status="unknown"/>
        <end position="388"/>
    </location>
</feature>
<feature type="domain" description="Peptidase A1" evidence="3">
    <location>
        <begin position="74"/>
        <end position="385"/>
    </location>
</feature>
<feature type="active site" evidence="4">
    <location>
        <position position="92"/>
    </location>
</feature>
<feature type="active site" evidence="4">
    <location>
        <position position="275"/>
    </location>
</feature>
<feature type="glycosylation site" description="N-linked (GlcNAc...) asparagine" evidence="2">
    <location>
        <position position="356"/>
    </location>
</feature>
<feature type="disulfide bond" evidence="1">
    <location>
        <begin position="105"/>
        <end position="110"/>
    </location>
</feature>
<feature type="disulfide bond" evidence="1">
    <location>
        <begin position="266"/>
        <end position="270"/>
    </location>
</feature>
<feature type="disulfide bond" evidence="1">
    <location>
        <begin position="309"/>
        <end position="344"/>
    </location>
</feature>
<proteinExistence type="evidence at transcript level"/>
<protein>
    <recommendedName>
        <fullName>Pregnancy-associated glycoprotein</fullName>
        <shortName>PAG</shortName>
        <ecNumber>3.4.23.-</ecNumber>
    </recommendedName>
</protein>
<name>PAG_HORSE</name>
<gene>
    <name type="primary">PAG</name>
</gene>
<organism>
    <name type="scientific">Equus caballus</name>
    <name type="common">Horse</name>
    <dbReference type="NCBI Taxonomy" id="9796"/>
    <lineage>
        <taxon>Eukaryota</taxon>
        <taxon>Metazoa</taxon>
        <taxon>Chordata</taxon>
        <taxon>Craniata</taxon>
        <taxon>Vertebrata</taxon>
        <taxon>Euteleostomi</taxon>
        <taxon>Mammalia</taxon>
        <taxon>Eutheria</taxon>
        <taxon>Laurasiatheria</taxon>
        <taxon>Perissodactyla</taxon>
        <taxon>Equidae</taxon>
        <taxon>Equus</taxon>
    </lineage>
</organism>
<sequence length="388" mass="42891">MKWFGVLGLVTLSECLVTIPLVKIKSLRENLREKDMLKEYLEKYPFRLTHKLLHKHADSGVAFEPMRNYLDIAYMGIISVGTPPQEFQVIFDTGSADLWVPSIYCSSPACSNHNTFNPLRSSTFVASGQPIKLIYGTGKMSGFVGYDTIKISSLVDRNQAFGLSVEEPDKILELATFDGILGLSYPSLSVKGVTPVFDNLWNQGLLSQKLFAFYLSRKGKKGSVVMFGGVDPSYYTGELHWVPVSKPLYWQISMDSISINGKVIACDGGCQAIVDTGTSLLLGPQDAVLNIQEIIQARRSTSGEYFIDCDAVNTLPDILFTIDGIGYPVPANAYIQKDAALGICFSSFEGNEDISNNSEEWILGDVFLRLYFTVFDRENDRIGLATAV</sequence>
<comment type="subcellular location">
    <subcellularLocation>
        <location>Secreted</location>
        <location>Extracellular space</location>
    </subcellularLocation>
</comment>
<comment type="tissue specificity">
    <text>Trophoblast and placental tissue.</text>
</comment>
<comment type="similarity">
    <text evidence="5">Belongs to the peptidase A1 family.</text>
</comment>
<dbReference type="EC" id="3.4.23.-"/>
<dbReference type="EMBL" id="L38511">
    <property type="protein sequence ID" value="AAC14885.1"/>
    <property type="molecule type" value="mRNA"/>
</dbReference>
<dbReference type="RefSeq" id="NP_001075412.1">
    <property type="nucleotide sequence ID" value="NM_001081943.2"/>
</dbReference>
<dbReference type="SMR" id="Q28389"/>
<dbReference type="STRING" id="9796.ENSECAP00000011361"/>
<dbReference type="MEROPS" id="A01.051"/>
<dbReference type="GlyCosmos" id="Q28389">
    <property type="glycosylation" value="1 site, No reported glycans"/>
</dbReference>
<dbReference type="PaxDb" id="9796-ENSECAP00000011361"/>
<dbReference type="GeneID" id="100034171"/>
<dbReference type="KEGG" id="ecb:100034171"/>
<dbReference type="CTD" id="10216630"/>
<dbReference type="HOGENOM" id="CLU_013253_3_0_1"/>
<dbReference type="InParanoid" id="Q28389"/>
<dbReference type="OMA" id="MKWFGVL"/>
<dbReference type="OrthoDB" id="771136at2759"/>
<dbReference type="TreeFam" id="TF314990"/>
<dbReference type="Proteomes" id="UP000002281">
    <property type="component" value="Chromosome 12"/>
</dbReference>
<dbReference type="Bgee" id="ENSECAG00000013027">
    <property type="expression patterns" value="Expressed in chorionic villus and 2 other cell types or tissues"/>
</dbReference>
<dbReference type="GO" id="GO:0005576">
    <property type="term" value="C:extracellular region"/>
    <property type="evidence" value="ECO:0007669"/>
    <property type="project" value="UniProtKB-SubCell"/>
</dbReference>
<dbReference type="GO" id="GO:0004190">
    <property type="term" value="F:aspartic-type endopeptidase activity"/>
    <property type="evidence" value="ECO:0000318"/>
    <property type="project" value="GO_Central"/>
</dbReference>
<dbReference type="GO" id="GO:0006508">
    <property type="term" value="P:proteolysis"/>
    <property type="evidence" value="ECO:0000318"/>
    <property type="project" value="GO_Central"/>
</dbReference>
<dbReference type="FunFam" id="2.40.70.10:FF:000006">
    <property type="entry name" value="Cathepsin E"/>
    <property type="match status" value="1"/>
</dbReference>
<dbReference type="FunFam" id="2.40.70.10:FF:000004">
    <property type="entry name" value="Pepsin A"/>
    <property type="match status" value="1"/>
</dbReference>
<dbReference type="Gene3D" id="6.10.140.60">
    <property type="match status" value="1"/>
</dbReference>
<dbReference type="Gene3D" id="2.40.70.10">
    <property type="entry name" value="Acid Proteases"/>
    <property type="match status" value="2"/>
</dbReference>
<dbReference type="InterPro" id="IPR001461">
    <property type="entry name" value="Aspartic_peptidase_A1"/>
</dbReference>
<dbReference type="InterPro" id="IPR001969">
    <property type="entry name" value="Aspartic_peptidase_AS"/>
</dbReference>
<dbReference type="InterPro" id="IPR012848">
    <property type="entry name" value="Aspartic_peptidase_N"/>
</dbReference>
<dbReference type="InterPro" id="IPR033121">
    <property type="entry name" value="PEPTIDASE_A1"/>
</dbReference>
<dbReference type="InterPro" id="IPR021109">
    <property type="entry name" value="Peptidase_aspartic_dom_sf"/>
</dbReference>
<dbReference type="PANTHER" id="PTHR47966">
    <property type="entry name" value="BETA-SITE APP-CLEAVING ENZYME, ISOFORM A-RELATED"/>
    <property type="match status" value="1"/>
</dbReference>
<dbReference type="PANTHER" id="PTHR47966:SF49">
    <property type="entry name" value="PEPSIN A-5"/>
    <property type="match status" value="1"/>
</dbReference>
<dbReference type="Pfam" id="PF07966">
    <property type="entry name" value="A1_Propeptide"/>
    <property type="match status" value="1"/>
</dbReference>
<dbReference type="Pfam" id="PF00026">
    <property type="entry name" value="Asp"/>
    <property type="match status" value="1"/>
</dbReference>
<dbReference type="PRINTS" id="PR00792">
    <property type="entry name" value="PEPSIN"/>
</dbReference>
<dbReference type="SUPFAM" id="SSF50630">
    <property type="entry name" value="Acid proteases"/>
    <property type="match status" value="1"/>
</dbReference>
<dbReference type="PROSITE" id="PS00141">
    <property type="entry name" value="ASP_PROTEASE"/>
    <property type="match status" value="2"/>
</dbReference>
<dbReference type="PROSITE" id="PS51767">
    <property type="entry name" value="PEPTIDASE_A1"/>
    <property type="match status" value="1"/>
</dbReference>
<evidence type="ECO:0000250" key="1"/>
<evidence type="ECO:0000255" key="2"/>
<evidence type="ECO:0000255" key="3">
    <source>
        <dbReference type="PROSITE-ProRule" id="PRU01103"/>
    </source>
</evidence>
<evidence type="ECO:0000255" key="4">
    <source>
        <dbReference type="PROSITE-ProRule" id="PRU10094"/>
    </source>
</evidence>
<evidence type="ECO:0000305" key="5"/>
<reference key="1">
    <citation type="journal article" date="1998" name="Adv. Exp. Med. Biol.">
        <title>An aspartic proteinase expressed in the equine placenta.</title>
        <authorList>
            <person name="Green J."/>
            <person name="Xie S."/>
            <person name="Gan X."/>
            <person name="Roberts R.M."/>
        </authorList>
    </citation>
    <scope>NUCLEOTIDE SEQUENCE [MRNA]</scope>
    <source>
        <tissue>Placenta</tissue>
    </source>
</reference>